<gene>
    <name evidence="1" type="primary">hutH</name>
    <name type="ordered locus">Bmul_1098</name>
    <name type="ordered locus">BMULJ_02158</name>
</gene>
<keyword id="KW-0963">Cytoplasm</keyword>
<keyword id="KW-0369">Histidine metabolism</keyword>
<keyword id="KW-0456">Lyase</keyword>
<keyword id="KW-1185">Reference proteome</keyword>
<comment type="catalytic activity">
    <reaction evidence="1">
        <text>L-histidine = trans-urocanate + NH4(+)</text>
        <dbReference type="Rhea" id="RHEA:21232"/>
        <dbReference type="ChEBI" id="CHEBI:17771"/>
        <dbReference type="ChEBI" id="CHEBI:28938"/>
        <dbReference type="ChEBI" id="CHEBI:57595"/>
        <dbReference type="EC" id="4.3.1.3"/>
    </reaction>
</comment>
<comment type="pathway">
    <text evidence="1">Amino-acid degradation; L-histidine degradation into L-glutamate; N-formimidoyl-L-glutamate from L-histidine: step 1/3.</text>
</comment>
<comment type="subcellular location">
    <subcellularLocation>
        <location evidence="1">Cytoplasm</location>
    </subcellularLocation>
</comment>
<comment type="PTM">
    <text evidence="1">Contains an active site 4-methylidene-imidazol-5-one (MIO), which is formed autocatalytically by cyclization and dehydration of residues Ala-Ser-Gly.</text>
</comment>
<comment type="similarity">
    <text evidence="1">Belongs to the PAL/histidase family.</text>
</comment>
<name>HUTH_BURM1</name>
<evidence type="ECO:0000255" key="1">
    <source>
        <dbReference type="HAMAP-Rule" id="MF_00229"/>
    </source>
</evidence>
<organism>
    <name type="scientific">Burkholderia multivorans (strain ATCC 17616 / 249)</name>
    <dbReference type="NCBI Taxonomy" id="395019"/>
    <lineage>
        <taxon>Bacteria</taxon>
        <taxon>Pseudomonadati</taxon>
        <taxon>Pseudomonadota</taxon>
        <taxon>Betaproteobacteria</taxon>
        <taxon>Burkholderiales</taxon>
        <taxon>Burkholderiaceae</taxon>
        <taxon>Burkholderia</taxon>
        <taxon>Burkholderia cepacia complex</taxon>
    </lineage>
</organism>
<reference key="1">
    <citation type="submission" date="2007-10" db="EMBL/GenBank/DDBJ databases">
        <title>Complete sequence of chromosome 1 of Burkholderia multivorans ATCC 17616.</title>
        <authorList>
            <person name="Copeland A."/>
            <person name="Lucas S."/>
            <person name="Lapidus A."/>
            <person name="Barry K."/>
            <person name="Glavina del Rio T."/>
            <person name="Dalin E."/>
            <person name="Tice H."/>
            <person name="Pitluck S."/>
            <person name="Chain P."/>
            <person name="Malfatti S."/>
            <person name="Shin M."/>
            <person name="Vergez L."/>
            <person name="Schmutz J."/>
            <person name="Larimer F."/>
            <person name="Land M."/>
            <person name="Hauser L."/>
            <person name="Kyrpides N."/>
            <person name="Kim E."/>
            <person name="Tiedje J."/>
            <person name="Richardson P."/>
        </authorList>
    </citation>
    <scope>NUCLEOTIDE SEQUENCE [LARGE SCALE GENOMIC DNA]</scope>
    <source>
        <strain>ATCC 17616 / 249</strain>
    </source>
</reference>
<reference key="2">
    <citation type="submission" date="2007-04" db="EMBL/GenBank/DDBJ databases">
        <title>Complete genome sequence of Burkholderia multivorans ATCC 17616.</title>
        <authorList>
            <person name="Ohtsubo Y."/>
            <person name="Yamashita A."/>
            <person name="Kurokawa K."/>
            <person name="Takami H."/>
            <person name="Yuhara S."/>
            <person name="Nishiyama E."/>
            <person name="Endo R."/>
            <person name="Miyazaki R."/>
            <person name="Ono A."/>
            <person name="Yano K."/>
            <person name="Ito M."/>
            <person name="Sota M."/>
            <person name="Yuji N."/>
            <person name="Hattori M."/>
            <person name="Tsuda M."/>
        </authorList>
    </citation>
    <scope>NUCLEOTIDE SEQUENCE [LARGE SCALE GENOMIC DNA]</scope>
    <source>
        <strain>ATCC 17616 / 249</strain>
    </source>
</reference>
<protein>
    <recommendedName>
        <fullName evidence="1">Histidine ammonia-lyase</fullName>
        <shortName evidence="1">Histidase</shortName>
        <ecNumber evidence="1">4.3.1.3</ecNumber>
    </recommendedName>
</protein>
<dbReference type="EC" id="4.3.1.3" evidence="1"/>
<dbReference type="EMBL" id="CP000868">
    <property type="protein sequence ID" value="ABX14788.1"/>
    <property type="molecule type" value="Genomic_DNA"/>
</dbReference>
<dbReference type="EMBL" id="AP009385">
    <property type="protein sequence ID" value="BAG44062.1"/>
    <property type="molecule type" value="Genomic_DNA"/>
</dbReference>
<dbReference type="RefSeq" id="WP_012213046.1">
    <property type="nucleotide sequence ID" value="NC_010084.1"/>
</dbReference>
<dbReference type="SMR" id="A9AGP7"/>
<dbReference type="STRING" id="395019.BMULJ_02158"/>
<dbReference type="KEGG" id="bmj:BMULJ_02158"/>
<dbReference type="KEGG" id="bmu:Bmul_1098"/>
<dbReference type="eggNOG" id="COG2986">
    <property type="taxonomic scope" value="Bacteria"/>
</dbReference>
<dbReference type="HOGENOM" id="CLU_014801_4_0_4"/>
<dbReference type="UniPathway" id="UPA00379">
    <property type="reaction ID" value="UER00549"/>
</dbReference>
<dbReference type="Proteomes" id="UP000008815">
    <property type="component" value="Chromosome 1"/>
</dbReference>
<dbReference type="GO" id="GO:0005737">
    <property type="term" value="C:cytoplasm"/>
    <property type="evidence" value="ECO:0007669"/>
    <property type="project" value="UniProtKB-SubCell"/>
</dbReference>
<dbReference type="GO" id="GO:0004397">
    <property type="term" value="F:histidine ammonia-lyase activity"/>
    <property type="evidence" value="ECO:0007669"/>
    <property type="project" value="UniProtKB-UniRule"/>
</dbReference>
<dbReference type="GO" id="GO:0019556">
    <property type="term" value="P:L-histidine catabolic process to glutamate and formamide"/>
    <property type="evidence" value="ECO:0007669"/>
    <property type="project" value="UniProtKB-UniPathway"/>
</dbReference>
<dbReference type="GO" id="GO:0019557">
    <property type="term" value="P:L-histidine catabolic process to glutamate and formate"/>
    <property type="evidence" value="ECO:0007669"/>
    <property type="project" value="UniProtKB-UniPathway"/>
</dbReference>
<dbReference type="CDD" id="cd00332">
    <property type="entry name" value="PAL-HAL"/>
    <property type="match status" value="1"/>
</dbReference>
<dbReference type="FunFam" id="1.10.275.10:FF:000005">
    <property type="entry name" value="Histidine ammonia-lyase"/>
    <property type="match status" value="1"/>
</dbReference>
<dbReference type="FunFam" id="1.20.200.10:FF:000003">
    <property type="entry name" value="Histidine ammonia-lyase"/>
    <property type="match status" value="1"/>
</dbReference>
<dbReference type="Gene3D" id="1.20.200.10">
    <property type="entry name" value="Fumarase/aspartase (Central domain)"/>
    <property type="match status" value="1"/>
</dbReference>
<dbReference type="Gene3D" id="1.10.275.10">
    <property type="entry name" value="Fumarase/aspartase (N-terminal domain)"/>
    <property type="match status" value="1"/>
</dbReference>
<dbReference type="HAMAP" id="MF_00229">
    <property type="entry name" value="His_ammonia_lyase"/>
    <property type="match status" value="1"/>
</dbReference>
<dbReference type="InterPro" id="IPR001106">
    <property type="entry name" value="Aromatic_Lyase"/>
</dbReference>
<dbReference type="InterPro" id="IPR024083">
    <property type="entry name" value="Fumarase/histidase_N"/>
</dbReference>
<dbReference type="InterPro" id="IPR005921">
    <property type="entry name" value="HutH"/>
</dbReference>
<dbReference type="InterPro" id="IPR008948">
    <property type="entry name" value="L-Aspartase-like"/>
</dbReference>
<dbReference type="InterPro" id="IPR022313">
    <property type="entry name" value="Phe/His_NH3-lyase_AS"/>
</dbReference>
<dbReference type="NCBIfam" id="TIGR01225">
    <property type="entry name" value="hutH"/>
    <property type="match status" value="1"/>
</dbReference>
<dbReference type="NCBIfam" id="NF006871">
    <property type="entry name" value="PRK09367.1"/>
    <property type="match status" value="1"/>
</dbReference>
<dbReference type="PANTHER" id="PTHR10362">
    <property type="entry name" value="HISTIDINE AMMONIA-LYASE"/>
    <property type="match status" value="1"/>
</dbReference>
<dbReference type="Pfam" id="PF00221">
    <property type="entry name" value="Lyase_aromatic"/>
    <property type="match status" value="1"/>
</dbReference>
<dbReference type="SUPFAM" id="SSF48557">
    <property type="entry name" value="L-aspartase-like"/>
    <property type="match status" value="1"/>
</dbReference>
<dbReference type="PROSITE" id="PS00488">
    <property type="entry name" value="PAL_HISTIDASE"/>
    <property type="match status" value="1"/>
</dbReference>
<feature type="chain" id="PRO_1000100438" description="Histidine ammonia-lyase">
    <location>
        <begin position="1"/>
        <end position="506"/>
    </location>
</feature>
<feature type="modified residue" description="2,3-didehydroalanine (Ser)" evidence="1">
    <location>
        <position position="142"/>
    </location>
</feature>
<feature type="cross-link" description="5-imidazolinone (Ala-Gly)" evidence="1">
    <location>
        <begin position="141"/>
        <end position="143"/>
    </location>
</feature>
<proteinExistence type="inferred from homology"/>
<accession>A9AGP7</accession>
<sequence length="506" mass="53207">MITLTPGHLTLPQLRQIAREPVQLTLDPASFAKIDAGAKAVSDIAAKGEPAYGINTGFGRLASTHIPHDQLELLQKNLVLSHAVGVGEPMARSSVRLLIALKLSSLGRGHSGIRREVMDALIKLFNADVLPLIPVKGSVGASGDLAPLAHMSAVLLGVGEVFIRGERASAVDGLRVAGLAPLTLQAKEGLALLNGTQASTALALDNLFAIEDLYRTALVAGALSVDAAAGSVKPFDARIHELRGHRGQIDAAAAYRELLEGSAINLSHRDCGKVQDPYSLRCQPQVMGACLDQMRHAADVLLVEANAVSDNPLIFPDTGEVLSGGNFHAEPVAFAADNLALAAAEIGALAERRIALLIDATLSGLPPFLVKDGGVNSGFMIAHVTAAALASENKTLAHPASVDSLPTSANQEDHVSMATFAARKLADIADNTKHILAIELLAAAQGVDLRENETSPKLAEVMKTIRSKVAHYELDHYFAPDIAVIAKLVVERAFAKHCPFAFASEQ</sequence>